<organism>
    <name type="scientific">Salmonella typhimurium</name>
    <dbReference type="NCBI Taxonomy" id="90371"/>
    <lineage>
        <taxon>Bacteria</taxon>
        <taxon>Pseudomonadati</taxon>
        <taxon>Pseudomonadota</taxon>
        <taxon>Gammaproteobacteria</taxon>
        <taxon>Enterobacterales</taxon>
        <taxon>Enterobacteriaceae</taxon>
        <taxon>Salmonella</taxon>
    </lineage>
</organism>
<reference key="1">
    <citation type="journal article" date="1992" name="Plasmid">
        <title>Complete nucleotide sequence and gene organization of plasmid NTP16.</title>
        <authorList>
            <person name="Cannon P.M."/>
            <person name="Strike P."/>
        </authorList>
    </citation>
    <scope>NUCLEOTIDE SEQUENCE [GENOMIC DNA]</scope>
    <source>
        <transposon>Tn4353</transposon>
    </source>
</reference>
<evidence type="ECO:0000250" key="1"/>
<evidence type="ECO:0000305" key="2"/>
<accession>Q03447</accession>
<keyword id="KW-0046">Antibiotic resistance</keyword>
<keyword id="KW-0067">ATP-binding</keyword>
<keyword id="KW-0418">Kinase</keyword>
<keyword id="KW-0547">Nucleotide-binding</keyword>
<keyword id="KW-0614">Plasmid</keyword>
<keyword id="KW-0808">Transferase</keyword>
<keyword id="KW-0814">Transposable element</keyword>
<comment type="function">
    <text>Resistance to kanamycin and structurally-related aminoglycosides, including amikacin.</text>
</comment>
<comment type="catalytic activity">
    <reaction>
        <text>kanamycin A + ATP = kanamycin 3'-phosphate + ADP + H(+)</text>
        <dbReference type="Rhea" id="RHEA:24256"/>
        <dbReference type="ChEBI" id="CHEBI:15378"/>
        <dbReference type="ChEBI" id="CHEBI:30616"/>
        <dbReference type="ChEBI" id="CHEBI:57909"/>
        <dbReference type="ChEBI" id="CHEBI:58214"/>
        <dbReference type="ChEBI" id="CHEBI:456216"/>
        <dbReference type="EC" id="2.7.1.95"/>
    </reaction>
</comment>
<comment type="similarity">
    <text evidence="2">Belongs to the aminoglycoside phosphotransferase family.</text>
</comment>
<sequence>MSHIQRETSCSRPRLNSNMDADLYGYKWARDNVGQSGATIDRLYGKPDAPELFLKHGKGSVANDVTDEMVRLNWMTEFMPLPTIKHFIRTPDDAWLLTTAIPGKTAFQVLEEYPDSGENIVDALAVFLRRLHSIPVCNCPFNSDRVFRLVQAQSRMNNGLVDASDFDDERNGWPVEQVWKEMHKLLPFSPDSVVTHGDFSLDNLIFDEGKLIGCIDVGRVGIADRYQDLAILWNCLGEFSPSLQKRLFQKYGIDNPDMNKLQFTLMLDEFF</sequence>
<geneLocation type="plasmid">
    <name>NTP16</name>
</geneLocation>
<dbReference type="EC" id="2.7.1.95"/>
<dbReference type="EMBL" id="L05392">
    <property type="protein sequence ID" value="AAA72313.1"/>
    <property type="molecule type" value="Genomic_DNA"/>
</dbReference>
<dbReference type="PIR" id="JQ1545">
    <property type="entry name" value="JQ1545"/>
</dbReference>
<dbReference type="RefSeq" id="NP_052154.1">
    <property type="nucleotide sequence ID" value="NC_002090.1"/>
</dbReference>
<dbReference type="RefSeq" id="WP_010891090.1">
    <property type="nucleotide sequence ID" value="NC_002090.1"/>
</dbReference>
<dbReference type="SMR" id="Q03447"/>
<dbReference type="GO" id="GO:0005524">
    <property type="term" value="F:ATP binding"/>
    <property type="evidence" value="ECO:0007669"/>
    <property type="project" value="UniProtKB-KW"/>
</dbReference>
<dbReference type="GO" id="GO:0008910">
    <property type="term" value="F:kanamycin kinase activity"/>
    <property type="evidence" value="ECO:0007669"/>
    <property type="project" value="UniProtKB-EC"/>
</dbReference>
<dbReference type="GO" id="GO:0046677">
    <property type="term" value="P:response to antibiotic"/>
    <property type="evidence" value="ECO:0007669"/>
    <property type="project" value="UniProtKB-KW"/>
</dbReference>
<dbReference type="CDD" id="cd05150">
    <property type="entry name" value="APH"/>
    <property type="match status" value="1"/>
</dbReference>
<dbReference type="Gene3D" id="3.90.1200.10">
    <property type="match status" value="1"/>
</dbReference>
<dbReference type="Gene3D" id="3.30.200.20">
    <property type="entry name" value="Phosphorylase Kinase, domain 1"/>
    <property type="match status" value="1"/>
</dbReference>
<dbReference type="InterPro" id="IPR051678">
    <property type="entry name" value="AGP_Transferase"/>
</dbReference>
<dbReference type="InterPro" id="IPR002575">
    <property type="entry name" value="Aminoglycoside_PTrfase"/>
</dbReference>
<dbReference type="InterPro" id="IPR024165">
    <property type="entry name" value="Kan/Strep_kinase"/>
</dbReference>
<dbReference type="InterPro" id="IPR011009">
    <property type="entry name" value="Kinase-like_dom_sf"/>
</dbReference>
<dbReference type="NCBIfam" id="NF033068">
    <property type="entry name" value="APH_3p"/>
    <property type="match status" value="1"/>
</dbReference>
<dbReference type="NCBIfam" id="NF033059">
    <property type="entry name" value="APH_3p_I"/>
    <property type="match status" value="1"/>
</dbReference>
<dbReference type="PANTHER" id="PTHR21310:SF41">
    <property type="entry name" value="3'-PHOSPHOTRANSFERASE, PUTATIVE-RELATED"/>
    <property type="match status" value="1"/>
</dbReference>
<dbReference type="PANTHER" id="PTHR21310">
    <property type="entry name" value="AMINOGLYCOSIDE PHOSPHOTRANSFERASE-RELATED-RELATED"/>
    <property type="match status" value="1"/>
</dbReference>
<dbReference type="Pfam" id="PF01636">
    <property type="entry name" value="APH"/>
    <property type="match status" value="1"/>
</dbReference>
<dbReference type="PIRSF" id="PIRSF000706">
    <property type="entry name" value="Kanamycin_kin"/>
    <property type="match status" value="1"/>
</dbReference>
<dbReference type="SUPFAM" id="SSF56112">
    <property type="entry name" value="Protein kinase-like (PK-like)"/>
    <property type="match status" value="1"/>
</dbReference>
<name>KKA1_SALTM</name>
<proteinExistence type="inferred from homology"/>
<feature type="chain" id="PRO_0000204803" description="Aminoglycoside 3'-phosphotransferase">
    <location>
        <begin position="1"/>
        <end position="271"/>
    </location>
</feature>
<feature type="active site" description="Proton acceptor" evidence="1">
    <location>
        <position position="198"/>
    </location>
</feature>
<protein>
    <recommendedName>
        <fullName>Aminoglycoside 3'-phosphotransferase</fullName>
        <ecNumber>2.7.1.95</ecNumber>
    </recommendedName>
    <alternativeName>
        <fullName>APH(3')-I</fullName>
        <shortName>APH(3')I</shortName>
    </alternativeName>
    <alternativeName>
        <fullName>Kanamycin kinase, type I</fullName>
    </alternativeName>
    <alternativeName>
        <fullName>Neomycin-kanamycin phosphotransferase type I</fullName>
    </alternativeName>
</protein>